<dbReference type="EMBL" id="EF508371">
    <property type="protein sequence ID" value="ABO70769.1"/>
    <property type="molecule type" value="Genomic_DNA"/>
</dbReference>
<dbReference type="RefSeq" id="YP_001293585.1">
    <property type="nucleotide sequence ID" value="NC_009573.1"/>
</dbReference>
<dbReference type="SMR" id="A6MW06"/>
<dbReference type="GeneID" id="5228520"/>
<dbReference type="GO" id="GO:0009507">
    <property type="term" value="C:chloroplast"/>
    <property type="evidence" value="ECO:0007669"/>
    <property type="project" value="UniProtKB-SubCell"/>
</dbReference>
<dbReference type="GO" id="GO:0015934">
    <property type="term" value="C:large ribosomal subunit"/>
    <property type="evidence" value="ECO:0007669"/>
    <property type="project" value="InterPro"/>
</dbReference>
<dbReference type="GO" id="GO:0019843">
    <property type="term" value="F:rRNA binding"/>
    <property type="evidence" value="ECO:0007669"/>
    <property type="project" value="UniProtKB-UniRule"/>
</dbReference>
<dbReference type="GO" id="GO:0003735">
    <property type="term" value="F:structural constituent of ribosome"/>
    <property type="evidence" value="ECO:0007669"/>
    <property type="project" value="InterPro"/>
</dbReference>
<dbReference type="GO" id="GO:0006412">
    <property type="term" value="P:translation"/>
    <property type="evidence" value="ECO:0007669"/>
    <property type="project" value="UniProtKB-UniRule"/>
</dbReference>
<dbReference type="CDD" id="cd00336">
    <property type="entry name" value="Ribosomal_L22"/>
    <property type="match status" value="1"/>
</dbReference>
<dbReference type="Gene3D" id="3.90.470.10">
    <property type="entry name" value="Ribosomal protein L22/L17"/>
    <property type="match status" value="1"/>
</dbReference>
<dbReference type="HAMAP" id="MF_01331_B">
    <property type="entry name" value="Ribosomal_uL22_B"/>
    <property type="match status" value="1"/>
</dbReference>
<dbReference type="InterPro" id="IPR001063">
    <property type="entry name" value="Ribosomal_uL22"/>
</dbReference>
<dbReference type="InterPro" id="IPR005727">
    <property type="entry name" value="Ribosomal_uL22_bac/chlpt-type"/>
</dbReference>
<dbReference type="InterPro" id="IPR047867">
    <property type="entry name" value="Ribosomal_uL22_bac/org-type"/>
</dbReference>
<dbReference type="InterPro" id="IPR018260">
    <property type="entry name" value="Ribosomal_uL22_CS"/>
</dbReference>
<dbReference type="InterPro" id="IPR036394">
    <property type="entry name" value="Ribosomal_uL22_sf"/>
</dbReference>
<dbReference type="NCBIfam" id="TIGR01044">
    <property type="entry name" value="rplV_bact"/>
    <property type="match status" value="1"/>
</dbReference>
<dbReference type="PANTHER" id="PTHR13501">
    <property type="entry name" value="CHLOROPLAST 50S RIBOSOMAL PROTEIN L22-RELATED"/>
    <property type="match status" value="1"/>
</dbReference>
<dbReference type="PANTHER" id="PTHR13501:SF10">
    <property type="entry name" value="LARGE RIBOSOMAL SUBUNIT PROTEIN UL22M"/>
    <property type="match status" value="1"/>
</dbReference>
<dbReference type="Pfam" id="PF00237">
    <property type="entry name" value="Ribosomal_L22"/>
    <property type="match status" value="1"/>
</dbReference>
<dbReference type="SUPFAM" id="SSF54843">
    <property type="entry name" value="Ribosomal protein L22"/>
    <property type="match status" value="1"/>
</dbReference>
<dbReference type="PROSITE" id="PS00464">
    <property type="entry name" value="RIBOSOMAL_L22"/>
    <property type="match status" value="1"/>
</dbReference>
<accession>A6MW06</accession>
<organism>
    <name type="scientific">Rhodomonas salina</name>
    <name type="common">Cryptomonas salina</name>
    <dbReference type="NCBI Taxonomy" id="52970"/>
    <lineage>
        <taxon>Eukaryota</taxon>
        <taxon>Cryptophyceae</taxon>
        <taxon>Pyrenomonadales</taxon>
        <taxon>Pyrenomonadaceae</taxon>
        <taxon>Rhodomonas</taxon>
    </lineage>
</organism>
<protein>
    <recommendedName>
        <fullName evidence="2">Large ribosomal subunit protein uL22c</fullName>
    </recommendedName>
    <alternativeName>
        <fullName>50S ribosomal protein L22, chloroplastic</fullName>
    </alternativeName>
</protein>
<geneLocation type="chloroplast"/>
<evidence type="ECO:0000250" key="1"/>
<evidence type="ECO:0000305" key="2"/>
<reference key="1">
    <citation type="journal article" date="2007" name="Mol. Biol. Evol.">
        <title>Plastid genome sequence of the cryptophyte alga Rhodomonas salina CCMP1319: lateral transfer of putative DNA replication machinery and a test of chromist plastid phylogeny.</title>
        <authorList>
            <person name="Khan H."/>
            <person name="Parks N."/>
            <person name="Kozera C."/>
            <person name="Curtis B.A."/>
            <person name="Parsons B.J."/>
            <person name="Bowman S."/>
            <person name="Archibald J.M."/>
        </authorList>
    </citation>
    <scope>NUCLEOTIDE SEQUENCE [LARGE SCALE GENOMIC DNA]</scope>
    <source>
        <strain>CCMP1319 / NEPCC76 / CS-174</strain>
    </source>
</reference>
<comment type="function">
    <text evidence="1">This protein binds specifically to 23S rRNA.</text>
</comment>
<comment type="function">
    <text evidence="1">The globular domain of the protein is located near the polypeptide exit tunnel on the outside of the subunit, while an extended beta-hairpin is found that lines the wall of the exit tunnel in the center of the 70S ribosome.</text>
</comment>
<comment type="subunit">
    <text evidence="1">Part of the 50S ribosomal subunit.</text>
</comment>
<comment type="subcellular location">
    <subcellularLocation>
        <location>Plastid</location>
        <location>Chloroplast</location>
    </subcellularLocation>
</comment>
<comment type="similarity">
    <text evidence="2">Belongs to the universal ribosomal protein uL22 family.</text>
</comment>
<sequence>MSTSVKQTEARAIAKYIRMSPFKVRRVLKQIRGRSYKEALMILEFMPYAACKPVLQLLQSAAANAQNNYGLQKDQMIVNYAYADPGPVLKRFRPRAQGRGFKIKKPTCHITVSLKEVL</sequence>
<gene>
    <name type="primary">rpl22</name>
</gene>
<proteinExistence type="inferred from homology"/>
<keyword id="KW-0150">Chloroplast</keyword>
<keyword id="KW-0934">Plastid</keyword>
<keyword id="KW-0687">Ribonucleoprotein</keyword>
<keyword id="KW-0689">Ribosomal protein</keyword>
<keyword id="KW-0694">RNA-binding</keyword>
<keyword id="KW-0699">rRNA-binding</keyword>
<feature type="chain" id="PRO_0000354596" description="Large ribosomal subunit protein uL22c">
    <location>
        <begin position="1"/>
        <end position="118"/>
    </location>
</feature>
<name>RK22_RHDSA</name>